<keyword id="KW-0223">Dioxygenase</keyword>
<keyword id="KW-0408">Iron</keyword>
<keyword id="KW-0479">Metal-binding</keyword>
<keyword id="KW-0560">Oxidoreductase</keyword>
<keyword id="KW-0847">Vitamin C</keyword>
<feature type="chain" id="PRO_1000131211" description="PKHD-type hydroxylase YbiX">
    <location>
        <begin position="1"/>
        <end position="225"/>
    </location>
</feature>
<feature type="domain" description="Fe2OG dioxygenase" evidence="1">
    <location>
        <begin position="78"/>
        <end position="177"/>
    </location>
</feature>
<feature type="binding site" evidence="1">
    <location>
        <position position="96"/>
    </location>
    <ligand>
        <name>Fe cation</name>
        <dbReference type="ChEBI" id="CHEBI:24875"/>
    </ligand>
</feature>
<feature type="binding site" evidence="1">
    <location>
        <position position="98"/>
    </location>
    <ligand>
        <name>Fe cation</name>
        <dbReference type="ChEBI" id="CHEBI:24875"/>
    </ligand>
</feature>
<feature type="binding site" evidence="1">
    <location>
        <position position="158"/>
    </location>
    <ligand>
        <name>Fe cation</name>
        <dbReference type="ChEBI" id="CHEBI:24875"/>
    </ligand>
</feature>
<feature type="binding site" evidence="1">
    <location>
        <position position="168"/>
    </location>
    <ligand>
        <name>2-oxoglutarate</name>
        <dbReference type="ChEBI" id="CHEBI:16810"/>
    </ligand>
</feature>
<accession>B7NNN5</accession>
<proteinExistence type="inferred from homology"/>
<dbReference type="EC" id="1.14.11.-" evidence="1"/>
<dbReference type="EMBL" id="CU928164">
    <property type="protein sequence ID" value="CAR16918.1"/>
    <property type="molecule type" value="Genomic_DNA"/>
</dbReference>
<dbReference type="RefSeq" id="WP_000990178.1">
    <property type="nucleotide sequence ID" value="NC_011750.1"/>
</dbReference>
<dbReference type="RefSeq" id="YP_002406806.1">
    <property type="nucleotide sequence ID" value="NC_011750.1"/>
</dbReference>
<dbReference type="SMR" id="B7NNN5"/>
<dbReference type="STRING" id="585057.ECIAI39_0781"/>
<dbReference type="KEGG" id="ect:ECIAI39_0781"/>
<dbReference type="PATRIC" id="fig|585057.6.peg.824"/>
<dbReference type="HOGENOM" id="CLU_106663_0_0_6"/>
<dbReference type="Proteomes" id="UP000000749">
    <property type="component" value="Chromosome"/>
</dbReference>
<dbReference type="GO" id="GO:0016706">
    <property type="term" value="F:2-oxoglutarate-dependent dioxygenase activity"/>
    <property type="evidence" value="ECO:0007669"/>
    <property type="project" value="UniProtKB-UniRule"/>
</dbReference>
<dbReference type="GO" id="GO:0005506">
    <property type="term" value="F:iron ion binding"/>
    <property type="evidence" value="ECO:0007669"/>
    <property type="project" value="UniProtKB-UniRule"/>
</dbReference>
<dbReference type="GO" id="GO:0031418">
    <property type="term" value="F:L-ascorbic acid binding"/>
    <property type="evidence" value="ECO:0007669"/>
    <property type="project" value="UniProtKB-KW"/>
</dbReference>
<dbReference type="GO" id="GO:0006974">
    <property type="term" value="P:DNA damage response"/>
    <property type="evidence" value="ECO:0007669"/>
    <property type="project" value="TreeGrafter"/>
</dbReference>
<dbReference type="GO" id="GO:0006879">
    <property type="term" value="P:intracellular iron ion homeostasis"/>
    <property type="evidence" value="ECO:0007669"/>
    <property type="project" value="TreeGrafter"/>
</dbReference>
<dbReference type="FunFam" id="2.60.120.620:FF:000006">
    <property type="entry name" value="PKHD-type hydroxylase YbiX"/>
    <property type="match status" value="1"/>
</dbReference>
<dbReference type="FunFam" id="4.10.860.20:FF:000001">
    <property type="entry name" value="PKHD-type hydroxylase YbiX"/>
    <property type="match status" value="1"/>
</dbReference>
<dbReference type="Gene3D" id="2.60.120.620">
    <property type="entry name" value="q2cbj1_9rhob like domain"/>
    <property type="match status" value="1"/>
</dbReference>
<dbReference type="Gene3D" id="4.10.860.20">
    <property type="entry name" value="Rabenosyn, Rab binding domain"/>
    <property type="match status" value="1"/>
</dbReference>
<dbReference type="HAMAP" id="MF_00657">
    <property type="entry name" value="Hydroxyl_YbiX"/>
    <property type="match status" value="1"/>
</dbReference>
<dbReference type="InterPro" id="IPR005123">
    <property type="entry name" value="Oxoglu/Fe-dep_dioxygenase_dom"/>
</dbReference>
<dbReference type="InterPro" id="IPR041097">
    <property type="entry name" value="PKHD_C"/>
</dbReference>
<dbReference type="InterPro" id="IPR023550">
    <property type="entry name" value="PKHD_hydroxylase"/>
</dbReference>
<dbReference type="InterPro" id="IPR006620">
    <property type="entry name" value="Pro_4_hyd_alph"/>
</dbReference>
<dbReference type="InterPro" id="IPR044862">
    <property type="entry name" value="Pro_4_hyd_alph_FE2OG_OXY"/>
</dbReference>
<dbReference type="NCBIfam" id="NF003972">
    <property type="entry name" value="PRK05467.1-1"/>
    <property type="match status" value="1"/>
</dbReference>
<dbReference type="NCBIfam" id="NF003974">
    <property type="entry name" value="PRK05467.1-3"/>
    <property type="match status" value="1"/>
</dbReference>
<dbReference type="NCBIfam" id="NF003975">
    <property type="entry name" value="PRK05467.1-4"/>
    <property type="match status" value="1"/>
</dbReference>
<dbReference type="PANTHER" id="PTHR41536">
    <property type="entry name" value="PKHD-TYPE HYDROXYLASE YBIX"/>
    <property type="match status" value="1"/>
</dbReference>
<dbReference type="PANTHER" id="PTHR41536:SF1">
    <property type="entry name" value="PKHD-TYPE HYDROXYLASE YBIX"/>
    <property type="match status" value="1"/>
</dbReference>
<dbReference type="Pfam" id="PF13640">
    <property type="entry name" value="2OG-FeII_Oxy_3"/>
    <property type="match status" value="1"/>
</dbReference>
<dbReference type="Pfam" id="PF18331">
    <property type="entry name" value="PKHD_C"/>
    <property type="match status" value="1"/>
</dbReference>
<dbReference type="SMART" id="SM00702">
    <property type="entry name" value="P4Hc"/>
    <property type="match status" value="1"/>
</dbReference>
<dbReference type="SUPFAM" id="SSF51197">
    <property type="entry name" value="Clavaminate synthase-like"/>
    <property type="match status" value="1"/>
</dbReference>
<dbReference type="PROSITE" id="PS51471">
    <property type="entry name" value="FE2OG_OXY"/>
    <property type="match status" value="1"/>
</dbReference>
<organism>
    <name type="scientific">Escherichia coli O7:K1 (strain IAI39 / ExPEC)</name>
    <dbReference type="NCBI Taxonomy" id="585057"/>
    <lineage>
        <taxon>Bacteria</taxon>
        <taxon>Pseudomonadati</taxon>
        <taxon>Pseudomonadota</taxon>
        <taxon>Gammaproteobacteria</taxon>
        <taxon>Enterobacterales</taxon>
        <taxon>Enterobacteriaceae</taxon>
        <taxon>Escherichia</taxon>
    </lineage>
</organism>
<protein>
    <recommendedName>
        <fullName evidence="1">PKHD-type hydroxylase YbiX</fullName>
        <ecNumber evidence="1">1.14.11.-</ecNumber>
    </recommendedName>
</protein>
<evidence type="ECO:0000255" key="1">
    <source>
        <dbReference type="HAMAP-Rule" id="MF_00657"/>
    </source>
</evidence>
<sequence length="225" mass="25490">MMYHIPGVLSPQDVARFREQLEQAEWVDGRVTTGAQGAQVKNNQQVDTRSTLYAALQNEVLNAVNQHALFFAAALPRTLSTPLFNRYQNNETYGFHVDGAVRSHPQNGWMRTDLSATLFLSDPQSYDGGELVVNDTFGQHRVKLPAGDLVLYPSSSLHCVTPVTRGVRVASFMWIQSMIRDDKKRAMLFELDTNIQSLKSRHGESEEILSLLNLYHNLLREWSEI</sequence>
<comment type="cofactor">
    <cofactor evidence="1">
        <name>Fe(2+)</name>
        <dbReference type="ChEBI" id="CHEBI:29033"/>
    </cofactor>
    <text evidence="1">Binds 1 Fe(2+) ion per subunit.</text>
</comment>
<comment type="cofactor">
    <cofactor evidence="1">
        <name>L-ascorbate</name>
        <dbReference type="ChEBI" id="CHEBI:38290"/>
    </cofactor>
</comment>
<name>YBIX_ECO7I</name>
<gene>
    <name evidence="1" type="primary">ybiX</name>
    <name type="ordered locus">ECIAI39_0781</name>
</gene>
<reference key="1">
    <citation type="journal article" date="2009" name="PLoS Genet.">
        <title>Organised genome dynamics in the Escherichia coli species results in highly diverse adaptive paths.</title>
        <authorList>
            <person name="Touchon M."/>
            <person name="Hoede C."/>
            <person name="Tenaillon O."/>
            <person name="Barbe V."/>
            <person name="Baeriswyl S."/>
            <person name="Bidet P."/>
            <person name="Bingen E."/>
            <person name="Bonacorsi S."/>
            <person name="Bouchier C."/>
            <person name="Bouvet O."/>
            <person name="Calteau A."/>
            <person name="Chiapello H."/>
            <person name="Clermont O."/>
            <person name="Cruveiller S."/>
            <person name="Danchin A."/>
            <person name="Diard M."/>
            <person name="Dossat C."/>
            <person name="Karoui M.E."/>
            <person name="Frapy E."/>
            <person name="Garry L."/>
            <person name="Ghigo J.M."/>
            <person name="Gilles A.M."/>
            <person name="Johnson J."/>
            <person name="Le Bouguenec C."/>
            <person name="Lescat M."/>
            <person name="Mangenot S."/>
            <person name="Martinez-Jehanne V."/>
            <person name="Matic I."/>
            <person name="Nassif X."/>
            <person name="Oztas S."/>
            <person name="Petit M.A."/>
            <person name="Pichon C."/>
            <person name="Rouy Z."/>
            <person name="Ruf C.S."/>
            <person name="Schneider D."/>
            <person name="Tourret J."/>
            <person name="Vacherie B."/>
            <person name="Vallenet D."/>
            <person name="Medigue C."/>
            <person name="Rocha E.P.C."/>
            <person name="Denamur E."/>
        </authorList>
    </citation>
    <scope>NUCLEOTIDE SEQUENCE [LARGE SCALE GENOMIC DNA]</scope>
    <source>
        <strain>IAI39 / ExPEC</strain>
    </source>
</reference>